<accession>P20919</accession>
<keyword id="KW-0175">Coiled coil</keyword>
<keyword id="KW-1035">Host cytoplasm</keyword>
<keyword id="KW-1048">Host nucleus</keyword>
<keyword id="KW-0509">mRNA transport</keyword>
<keyword id="KW-0694">RNA-binding</keyword>
<keyword id="KW-0813">Transport</keyword>
<organismHost>
    <name type="scientific">Equus asinus</name>
    <name type="common">Donkey</name>
    <name type="synonym">Equus africanus asinus</name>
    <dbReference type="NCBI Taxonomy" id="9793"/>
</organismHost>
<organismHost>
    <name type="scientific">Equus caballus</name>
    <name type="common">Horse</name>
    <dbReference type="NCBI Taxonomy" id="9796"/>
</organismHost>
<evidence type="ECO:0000250" key="1"/>
<evidence type="ECO:0000255" key="2"/>
<evidence type="ECO:0000256" key="3">
    <source>
        <dbReference type="SAM" id="MobiDB-lite"/>
    </source>
</evidence>
<evidence type="ECO:0000269" key="4">
    <source>
    </source>
</evidence>
<evidence type="ECO:0000305" key="5"/>
<feature type="chain" id="PRO_0000085478" description="Protein Rev">
    <location>
        <begin position="1"/>
        <end position="165"/>
    </location>
</feature>
<feature type="region of interest" description="Disordered" evidence="3">
    <location>
        <begin position="1"/>
        <end position="36"/>
    </location>
</feature>
<feature type="region of interest" description="Disordered" evidence="3">
    <location>
        <begin position="56"/>
        <end position="77"/>
    </location>
</feature>
<feature type="region of interest" description="RNA-binding (RRE)">
    <location>
        <begin position="57"/>
        <end position="130"/>
    </location>
</feature>
<feature type="region of interest" description="RNA-binding (RRE)">
    <location>
        <begin position="144"/>
        <end position="165"/>
    </location>
</feature>
<feature type="region of interest" description="Disordered" evidence="3">
    <location>
        <begin position="146"/>
        <end position="165"/>
    </location>
</feature>
<feature type="coiled-coil region" evidence="2">
    <location>
        <begin position="1"/>
        <end position="26"/>
    </location>
</feature>
<feature type="short sequence motif" description="Nuclear export signal" evidence="5">
    <location>
        <begin position="32"/>
        <end position="55"/>
    </location>
</feature>
<feature type="short sequence motif" description="Nuclear localization signal">
    <location>
        <begin position="159"/>
        <end position="163"/>
    </location>
</feature>
<feature type="compositionally biased region" description="Basic and acidic residues" evidence="3">
    <location>
        <begin position="1"/>
        <end position="32"/>
    </location>
</feature>
<feature type="mutagenesis site" description="Complete loss of nuclear import; when associated with A-160." evidence="4">
    <original>K</original>
    <variation>A</variation>
    <location>
        <position position="159"/>
    </location>
</feature>
<feature type="mutagenesis site" description="Complete loss of nuclear import; when associated with A-159 or A-161." evidence="4">
    <original>R</original>
    <variation>A</variation>
    <location>
        <position position="160"/>
    </location>
</feature>
<feature type="mutagenesis site" description="Complete loss of nuclear import; when associated with A-160 or A-162." evidence="4">
    <original>R</original>
    <variation>A</variation>
    <location>
        <position position="161"/>
    </location>
</feature>
<feature type="mutagenesis site" description="Complete loss of nuclear import; when associated with A-161 or A-163." evidence="4">
    <original>R</original>
    <variation>A</variation>
    <location>
        <position position="162"/>
    </location>
</feature>
<feature type="mutagenesis site" description="Complete loss of nuclear import; when associated with A-162." evidence="4">
    <original>K</original>
    <variation>A</variation>
    <location>
        <position position="163"/>
    </location>
</feature>
<feature type="sequence conflict" description="In Ref. 2." evidence="5" ref="2">
    <original>K</original>
    <variation>I</variation>
    <location>
        <position position="30"/>
    </location>
</feature>
<feature type="sequence conflict" description="In Ref. 2; AAA43027." evidence="5" ref="2">
    <original>C</original>
    <variation>Y</variation>
    <location>
        <position position="59"/>
    </location>
</feature>
<feature type="sequence conflict" description="In Ref. 2; AAA43027." evidence="5" ref="2">
    <original>T</original>
    <variation>A</variation>
    <location>
        <position position="88"/>
    </location>
</feature>
<feature type="sequence conflict" description="In Ref. 2; AAA43027." evidence="5" ref="2">
    <original>R</original>
    <variation>Q</variation>
    <location>
        <position position="114"/>
    </location>
</feature>
<name>REV_EIAVY</name>
<dbReference type="EMBL" id="M36592">
    <property type="protein sequence ID" value="AAB02404.1"/>
    <property type="molecule type" value="Genomic_RNA"/>
</dbReference>
<dbReference type="EMBL" id="M54797">
    <property type="protein sequence ID" value="AAA43027.1"/>
    <property type="status" value="ALT_INIT"/>
    <property type="molecule type" value="Genomic_RNA"/>
</dbReference>
<dbReference type="PIR" id="B46357">
    <property type="entry name" value="ASLJ22"/>
</dbReference>
<dbReference type="SMR" id="P20919"/>
<dbReference type="ELM" id="P20919"/>
<dbReference type="GO" id="GO:0030430">
    <property type="term" value="C:host cell cytoplasm"/>
    <property type="evidence" value="ECO:0007669"/>
    <property type="project" value="UniProtKB-SubCell"/>
</dbReference>
<dbReference type="GO" id="GO:0044196">
    <property type="term" value="C:host cell nucleolus"/>
    <property type="evidence" value="ECO:0007669"/>
    <property type="project" value="UniProtKB-SubCell"/>
</dbReference>
<dbReference type="GO" id="GO:0019031">
    <property type="term" value="C:viral envelope"/>
    <property type="evidence" value="ECO:0007669"/>
    <property type="project" value="InterPro"/>
</dbReference>
<dbReference type="GO" id="GO:0003723">
    <property type="term" value="F:RNA binding"/>
    <property type="evidence" value="ECO:0007669"/>
    <property type="project" value="UniProtKB-KW"/>
</dbReference>
<dbReference type="GO" id="GO:0005198">
    <property type="term" value="F:structural molecule activity"/>
    <property type="evidence" value="ECO:0007669"/>
    <property type="project" value="InterPro"/>
</dbReference>
<dbReference type="GO" id="GO:0051028">
    <property type="term" value="P:mRNA transport"/>
    <property type="evidence" value="ECO:0007669"/>
    <property type="project" value="UniProtKB-KW"/>
</dbReference>
<dbReference type="InterPro" id="IPR021311">
    <property type="entry name" value="EIAV_Rev"/>
</dbReference>
<dbReference type="InterPro" id="IPR001361">
    <property type="entry name" value="Gp90_EIAV"/>
</dbReference>
<dbReference type="Pfam" id="PF00971">
    <property type="entry name" value="EIAV_GP90"/>
    <property type="match status" value="1"/>
</dbReference>
<dbReference type="Pfam" id="PF11129">
    <property type="entry name" value="EIAV_Rev"/>
    <property type="match status" value="1"/>
</dbReference>
<comment type="function">
    <text evidence="1">Escorts unspliced or incompletely spliced viral pre-mRNAs (late transcripts) out of the nucleus of infected cells. These pre-mRNAs carry two recognition sequences that function as Rev responsive element (RRE), that are not present in fully spliced viral mRNAs (early transcripts). This function is essential since most viral proteins are translated from unspliced or partially spliced pre-mRNAs which cannot exit the nucleus by the pathway used by fully processed cellular mRNAs (By similarity).</text>
</comment>
<comment type="subunit">
    <text evidence="1">Homomultimer; when bound to the RRE. Multimeric assembly is essential for activity (By similarity).</text>
</comment>
<comment type="subcellular location">
    <subcellularLocation>
        <location evidence="4">Host nucleus</location>
        <location evidence="4">Host nucleolus</location>
    </subcellularLocation>
    <subcellularLocation>
        <location evidence="4">Host cytoplasm</location>
    </subcellularLocation>
    <text evidence="5">The presence of both nuclear import and nuclear export signals leads to continuous shuttling between the nucleus and cytoplasm.</text>
</comment>
<comment type="domain">
    <text>The bipartite RNA-binding motif binds to the RREs present in incompletely spliced viral pre-mRNAs. It consists of a central region, and a C-terminal region that also contains the NLS which mediates nuclear localization. These overlapping functions prevent Rev bound to RRE from undesirable return to the nucleus. When Rev binds the RRE, the NLS becomes masked while the NES remains accessible.</text>
</comment>
<comment type="sequence caution" evidence="5">
    <conflict type="erroneous initiation">
        <sequence resource="EMBL-CDS" id="AAA43027"/>
    </conflict>
</comment>
<reference key="1">
    <citation type="journal article" date="1990" name="Virology">
        <title>Identification of sequences encoding the equine infectious anemia virus tat gene.</title>
        <authorList>
            <person name="Noiman S."/>
            <person name="Gazit A."/>
            <person name="Tori O."/>
            <person name="Sherman L."/>
            <person name="Miki T."/>
            <person name="Tronick S.R."/>
            <person name="Yaniv A."/>
        </authorList>
    </citation>
    <scope>NUCLEOTIDE SEQUENCE [GENOMIC RNA]</scope>
</reference>
<reference key="2">
    <citation type="journal article" date="1990" name="J. Virol.">
        <title>Cloning and characterization of cDNAs encoding equine infectious anemia virus tat and putative Rev proteins.</title>
        <authorList>
            <person name="Stephens R.M."/>
            <person name="Derse D."/>
            <person name="Rice N.R."/>
        </authorList>
    </citation>
    <scope>NUCLEOTIDE SEQUENCE [GENOMIC RNA]</scope>
</reference>
<reference key="3">
    <citation type="journal article" date="1993" name="J. Virol.">
        <title>Identification of the activation domain of equine infectious anemia virus rev.</title>
        <authorList>
            <person name="Fridell R.A."/>
            <person name="Partin K.M."/>
            <person name="Carpenter S."/>
            <person name="Cullen B.R."/>
        </authorList>
    </citation>
    <scope>NUCLEAR EXPORT SIGNAL</scope>
</reference>
<reference key="4">
    <citation type="journal article" date="1996" name="J. Virol.">
        <title>Nuclear transport of human immunodeficiency virus type 1, visna virus, and equine infectious anemia virus Rev proteins: identification of a family of transferable nuclear export signals.</title>
        <authorList>
            <person name="Meyer B.E."/>
            <person name="Meinkoth J.L."/>
            <person name="Malim M.H."/>
        </authorList>
    </citation>
    <scope>NUCLEAR EXPORT SIGNAL</scope>
</reference>
<reference key="5">
    <citation type="journal article" date="2006" name="J. Virol.">
        <title>Characterization of functional domains of equine infectious anemia virus Rev suggests a bipartite RNA-binding domain.</title>
        <authorList>
            <person name="Lee J.-H."/>
            <person name="Murphy S.C."/>
            <person name="Belshan M."/>
            <person name="Sparks W.O."/>
            <person name="Wannemuehler Y."/>
            <person name="Liu S."/>
            <person name="Hope T.J."/>
            <person name="Dobbs D."/>
            <person name="Carpenter S."/>
        </authorList>
    </citation>
    <scope>CHARACTERIZATION</scope>
    <scope>RNA-BINDING</scope>
    <scope>SUBCELLULAR LOCATION</scope>
    <scope>MUTAGENESIS OF LYS-159; ARG-160; ARG-161; ARG-162 AND LYS-163</scope>
</reference>
<sequence>MAESKEARDQEMNLKEESKEEKRRNDWWKKDPQGPLESDQWCRVLRQSLPEEKIPSQTCIARRHLGPGPTQHTPSRRDRWIRGQILQTEVLQERLEWRIRGVQQAAKELGEVNRGIWRELYFREDQRGDFSAWGGYQRAQERLWGEQSSPRVLRPGDSKRRRKHL</sequence>
<gene>
    <name type="primary">rev</name>
</gene>
<proteinExistence type="evidence at protein level"/>
<protein>
    <recommendedName>
        <fullName>Protein Rev</fullName>
    </recommendedName>
    <alternativeName>
        <fullName>3'-ORF protein</fullName>
    </alternativeName>
</protein>
<organism>
    <name type="scientific">Equine infectious anemia virus (strain Wyoming)</name>
    <name type="common">EIAV</name>
    <dbReference type="NCBI Taxonomy" id="11672"/>
    <lineage>
        <taxon>Viruses</taxon>
        <taxon>Riboviria</taxon>
        <taxon>Pararnavirae</taxon>
        <taxon>Artverviricota</taxon>
        <taxon>Revtraviricetes</taxon>
        <taxon>Ortervirales</taxon>
        <taxon>Retroviridae</taxon>
        <taxon>Orthoretrovirinae</taxon>
        <taxon>Lentivirus</taxon>
        <taxon>Equine infectious anemia virus</taxon>
    </lineage>
</organism>